<proteinExistence type="evidence at protein level"/>
<evidence type="ECO:0000250" key="1"/>
<evidence type="ECO:0000250" key="2">
    <source>
        <dbReference type="UniProtKB" id="P32863"/>
    </source>
</evidence>
<evidence type="ECO:0000250" key="3">
    <source>
        <dbReference type="UniProtKB" id="Q7ZV09"/>
    </source>
</evidence>
<evidence type="ECO:0000250" key="4">
    <source>
        <dbReference type="UniProtKB" id="Q92698"/>
    </source>
</evidence>
<evidence type="ECO:0000255" key="5">
    <source>
        <dbReference type="PROSITE-ProRule" id="PRU00541"/>
    </source>
</evidence>
<evidence type="ECO:0000255" key="6">
    <source>
        <dbReference type="PROSITE-ProRule" id="PRU00542"/>
    </source>
</evidence>
<evidence type="ECO:0000256" key="7">
    <source>
        <dbReference type="SAM" id="MobiDB-lite"/>
    </source>
</evidence>
<evidence type="ECO:0000269" key="8">
    <source>
    </source>
</evidence>
<evidence type="ECO:0000269" key="9">
    <source>
    </source>
</evidence>
<evidence type="ECO:0000269" key="10">
    <source>
    </source>
</evidence>
<evidence type="ECO:0000269" key="11">
    <source>
    </source>
</evidence>
<evidence type="ECO:0000269" key="12">
    <source>
    </source>
</evidence>
<evidence type="ECO:0000269" key="13">
    <source>
    </source>
</evidence>
<evidence type="ECO:0000269" key="14">
    <source>
    </source>
</evidence>
<evidence type="ECO:0000269" key="15">
    <source>
    </source>
</evidence>
<evidence type="ECO:0000269" key="16">
    <source>
    </source>
</evidence>
<evidence type="ECO:0000305" key="17"/>
<reference key="1">
    <citation type="journal article" date="1996" name="Curr. Biol.">
        <title>Human and mouse homologs of the Saccharomyces cerevisiae RAD54 DNA repair gene: evidence for functional conservation.</title>
        <authorList>
            <person name="Kanaar R."/>
            <person name="Troelstra C."/>
            <person name="Swagemakers S.M.A."/>
            <person name="Essers J."/>
            <person name="Smit B."/>
            <person name="Franssen J.-H."/>
            <person name="Pastink A."/>
            <person name="Bezzubova O.Y."/>
            <person name="Buerstedde J.-M."/>
            <person name="Clever B."/>
            <person name="Heyer W.-D."/>
            <person name="Hoeijmakers J.H.J."/>
        </authorList>
    </citation>
    <scope>NUCLEOTIDE SEQUENCE [MRNA]</scope>
    <scope>TISSUE SPECIFICITY</scope>
    <source>
        <tissue>Testis</tissue>
    </source>
</reference>
<reference key="2">
    <citation type="journal article" date="2005" name="Science">
        <title>The transcriptional landscape of the mammalian genome.</title>
        <authorList>
            <person name="Carninci P."/>
            <person name="Kasukawa T."/>
            <person name="Katayama S."/>
            <person name="Gough J."/>
            <person name="Frith M.C."/>
            <person name="Maeda N."/>
            <person name="Oyama R."/>
            <person name="Ravasi T."/>
            <person name="Lenhard B."/>
            <person name="Wells C."/>
            <person name="Kodzius R."/>
            <person name="Shimokawa K."/>
            <person name="Bajic V.B."/>
            <person name="Brenner S.E."/>
            <person name="Batalov S."/>
            <person name="Forrest A.R."/>
            <person name="Zavolan M."/>
            <person name="Davis M.J."/>
            <person name="Wilming L.G."/>
            <person name="Aidinis V."/>
            <person name="Allen J.E."/>
            <person name="Ambesi-Impiombato A."/>
            <person name="Apweiler R."/>
            <person name="Aturaliya R.N."/>
            <person name="Bailey T.L."/>
            <person name="Bansal M."/>
            <person name="Baxter L."/>
            <person name="Beisel K.W."/>
            <person name="Bersano T."/>
            <person name="Bono H."/>
            <person name="Chalk A.M."/>
            <person name="Chiu K.P."/>
            <person name="Choudhary V."/>
            <person name="Christoffels A."/>
            <person name="Clutterbuck D.R."/>
            <person name="Crowe M.L."/>
            <person name="Dalla E."/>
            <person name="Dalrymple B.P."/>
            <person name="de Bono B."/>
            <person name="Della Gatta G."/>
            <person name="di Bernardo D."/>
            <person name="Down T."/>
            <person name="Engstrom P."/>
            <person name="Fagiolini M."/>
            <person name="Faulkner G."/>
            <person name="Fletcher C.F."/>
            <person name="Fukushima T."/>
            <person name="Furuno M."/>
            <person name="Futaki S."/>
            <person name="Gariboldi M."/>
            <person name="Georgii-Hemming P."/>
            <person name="Gingeras T.R."/>
            <person name="Gojobori T."/>
            <person name="Green R.E."/>
            <person name="Gustincich S."/>
            <person name="Harbers M."/>
            <person name="Hayashi Y."/>
            <person name="Hensch T.K."/>
            <person name="Hirokawa N."/>
            <person name="Hill D."/>
            <person name="Huminiecki L."/>
            <person name="Iacono M."/>
            <person name="Ikeo K."/>
            <person name="Iwama A."/>
            <person name="Ishikawa T."/>
            <person name="Jakt M."/>
            <person name="Kanapin A."/>
            <person name="Katoh M."/>
            <person name="Kawasawa Y."/>
            <person name="Kelso J."/>
            <person name="Kitamura H."/>
            <person name="Kitano H."/>
            <person name="Kollias G."/>
            <person name="Krishnan S.P."/>
            <person name="Kruger A."/>
            <person name="Kummerfeld S.K."/>
            <person name="Kurochkin I.V."/>
            <person name="Lareau L.F."/>
            <person name="Lazarevic D."/>
            <person name="Lipovich L."/>
            <person name="Liu J."/>
            <person name="Liuni S."/>
            <person name="McWilliam S."/>
            <person name="Madan Babu M."/>
            <person name="Madera M."/>
            <person name="Marchionni L."/>
            <person name="Matsuda H."/>
            <person name="Matsuzawa S."/>
            <person name="Miki H."/>
            <person name="Mignone F."/>
            <person name="Miyake S."/>
            <person name="Morris K."/>
            <person name="Mottagui-Tabar S."/>
            <person name="Mulder N."/>
            <person name="Nakano N."/>
            <person name="Nakauchi H."/>
            <person name="Ng P."/>
            <person name="Nilsson R."/>
            <person name="Nishiguchi S."/>
            <person name="Nishikawa S."/>
            <person name="Nori F."/>
            <person name="Ohara O."/>
            <person name="Okazaki Y."/>
            <person name="Orlando V."/>
            <person name="Pang K.C."/>
            <person name="Pavan W.J."/>
            <person name="Pavesi G."/>
            <person name="Pesole G."/>
            <person name="Petrovsky N."/>
            <person name="Piazza S."/>
            <person name="Reed J."/>
            <person name="Reid J.F."/>
            <person name="Ring B.Z."/>
            <person name="Ringwald M."/>
            <person name="Rost B."/>
            <person name="Ruan Y."/>
            <person name="Salzberg S.L."/>
            <person name="Sandelin A."/>
            <person name="Schneider C."/>
            <person name="Schoenbach C."/>
            <person name="Sekiguchi K."/>
            <person name="Semple C.A."/>
            <person name="Seno S."/>
            <person name="Sessa L."/>
            <person name="Sheng Y."/>
            <person name="Shibata Y."/>
            <person name="Shimada H."/>
            <person name="Shimada K."/>
            <person name="Silva D."/>
            <person name="Sinclair B."/>
            <person name="Sperling S."/>
            <person name="Stupka E."/>
            <person name="Sugiura K."/>
            <person name="Sultana R."/>
            <person name="Takenaka Y."/>
            <person name="Taki K."/>
            <person name="Tammoja K."/>
            <person name="Tan S.L."/>
            <person name="Tang S."/>
            <person name="Taylor M.S."/>
            <person name="Tegner J."/>
            <person name="Teichmann S.A."/>
            <person name="Ueda H.R."/>
            <person name="van Nimwegen E."/>
            <person name="Verardo R."/>
            <person name="Wei C.L."/>
            <person name="Yagi K."/>
            <person name="Yamanishi H."/>
            <person name="Zabarovsky E."/>
            <person name="Zhu S."/>
            <person name="Zimmer A."/>
            <person name="Hide W."/>
            <person name="Bult C."/>
            <person name="Grimmond S.M."/>
            <person name="Teasdale R.D."/>
            <person name="Liu E.T."/>
            <person name="Brusic V."/>
            <person name="Quackenbush J."/>
            <person name="Wahlestedt C."/>
            <person name="Mattick J.S."/>
            <person name="Hume D.A."/>
            <person name="Kai C."/>
            <person name="Sasaki D."/>
            <person name="Tomaru Y."/>
            <person name="Fukuda S."/>
            <person name="Kanamori-Katayama M."/>
            <person name="Suzuki M."/>
            <person name="Aoki J."/>
            <person name="Arakawa T."/>
            <person name="Iida J."/>
            <person name="Imamura K."/>
            <person name="Itoh M."/>
            <person name="Kato T."/>
            <person name="Kawaji H."/>
            <person name="Kawagashira N."/>
            <person name="Kawashima T."/>
            <person name="Kojima M."/>
            <person name="Kondo S."/>
            <person name="Konno H."/>
            <person name="Nakano K."/>
            <person name="Ninomiya N."/>
            <person name="Nishio T."/>
            <person name="Okada M."/>
            <person name="Plessy C."/>
            <person name="Shibata K."/>
            <person name="Shiraki T."/>
            <person name="Suzuki S."/>
            <person name="Tagami M."/>
            <person name="Waki K."/>
            <person name="Watahiki A."/>
            <person name="Okamura-Oho Y."/>
            <person name="Suzuki H."/>
            <person name="Kawai J."/>
            <person name="Hayashizaki Y."/>
        </authorList>
    </citation>
    <scope>NUCLEOTIDE SEQUENCE [LARGE SCALE MRNA]</scope>
    <source>
        <strain>NOD</strain>
        <tissue>Thymus</tissue>
    </source>
</reference>
<reference key="3">
    <citation type="journal article" date="2004" name="Genome Res.">
        <title>The status, quality, and expansion of the NIH full-length cDNA project: the Mammalian Gene Collection (MGC).</title>
        <authorList>
            <consortium name="The MGC Project Team"/>
        </authorList>
    </citation>
    <scope>NUCLEOTIDE SEQUENCE [LARGE SCALE MRNA]</scope>
    <source>
        <strain>Czech II</strain>
        <tissue>Mammary gland</tissue>
    </source>
</reference>
<reference key="4">
    <citation type="journal article" date="1997" name="Cell">
        <title>Disruption of mouse RAD54 reduces ionizing radiation resistance and homologous recombination.</title>
        <authorList>
            <person name="Essers J."/>
            <person name="Hendriks R.W."/>
            <person name="Swagemakers S.M.A."/>
            <person name="Troelstra C."/>
            <person name="de Wit J."/>
            <person name="Bootsma D."/>
            <person name="Hoeijmakers J.H.J."/>
            <person name="Kanaar R."/>
        </authorList>
    </citation>
    <scope>FUNCTION</scope>
</reference>
<reference key="5">
    <citation type="journal article" date="1999" name="Curr. Biol.">
        <title>Mouse Rad54 affects DNA conformation and DNA-damage-induced Rad51 foci formation.</title>
        <authorList>
            <person name="Tan T.L.R."/>
            <person name="Essers J."/>
            <person name="Citterio E."/>
            <person name="Swagemakers S.M.A."/>
            <person name="de Wit J."/>
            <person name="Benson F.E."/>
            <person name="Hoeijmakers J.H.J."/>
            <person name="Kanaar R."/>
        </authorList>
    </citation>
    <scope>FUNCTION</scope>
</reference>
<reference key="6">
    <citation type="journal article" date="2000" name="Mol. Cell. Biol.">
        <title>Mouse RAD54 affects DNA double-strand break repair and sister chromatid exchange.</title>
        <authorList>
            <person name="Dronkert M.L.G."/>
            <person name="Beverloo H.B."/>
            <person name="Johnson R.D."/>
            <person name="Hoeijmakers J.H.J."/>
            <person name="Jasin M."/>
            <person name="Kanaar R."/>
        </authorList>
    </citation>
    <scope>FUNCTION</scope>
</reference>
<reference key="7">
    <citation type="journal article" date="2002" name="J. Immunol.">
        <title>Gene conversion-like sequence transfers between transgenic antibody V genes are independent of RAD54.</title>
        <authorList>
            <person name="D'Avirro N."/>
            <person name="Truong D."/>
            <person name="Luong M."/>
            <person name="Kanaar R."/>
            <person name="Selsing E."/>
        </authorList>
    </citation>
    <scope>FUNCTION</scope>
</reference>
<reference key="8">
    <citation type="journal article" date="2002" name="DNA Repair">
        <title>Analysis of mouse Rad54 expression and its implications for homologous recombination.</title>
        <authorList>
            <person name="Essers J."/>
            <person name="Hendriks R.W."/>
            <person name="Wesoly J."/>
            <person name="Beerens C.E.M.T."/>
            <person name="Smit B."/>
            <person name="Hoeijmakers J.H.J."/>
            <person name="Wyman C."/>
            <person name="Dronkert M.L.G."/>
            <person name="Kanaar R."/>
        </authorList>
    </citation>
    <scope>LEVEL OF PROTEIN EXPRESSION</scope>
    <scope>FUNCTION</scope>
</reference>
<reference key="9">
    <citation type="journal article" date="2003" name="Eur. J. Immunol.">
        <title>Somatic hypermutation does not require Rad54 and Rad54B-mediated homologous recombination.</title>
        <authorList>
            <person name="Bross L."/>
            <person name="Wesoly J."/>
            <person name="Buerstedde J.-M."/>
            <person name="Kanaar R."/>
            <person name="Jacobs H."/>
        </authorList>
    </citation>
    <scope>FUNCTION</scope>
</reference>
<reference key="10">
    <citation type="journal article" date="2003" name="Mol. Cell. Biol.">
        <title>Role of mammalian Rad54 in telomere length maintenance.</title>
        <authorList>
            <person name="Jaco I."/>
            <person name="Munoz P."/>
            <person name="Goytisolo F."/>
            <person name="Wesoly J."/>
            <person name="Bailey S."/>
            <person name="Taccioli G."/>
            <person name="Blasco M.A."/>
        </authorList>
    </citation>
    <scope>FUNCTION</scope>
</reference>
<reference key="11">
    <citation type="journal article" date="2004" name="Genes Dev.">
        <title>Rad54 and DNA ligase IV cooperate to maintain mammalian chromatid stability.</title>
        <authorList>
            <person name="Mills K.D."/>
            <person name="Ferguson D.O."/>
            <person name="Essers J."/>
            <person name="Eckersdorff M."/>
            <person name="Kanaar R."/>
            <person name="Alt F.W."/>
        </authorList>
    </citation>
    <scope>FUNCTION</scope>
</reference>
<protein>
    <recommendedName>
        <fullName>DNA repair and recombination protein RAD54-like</fullName>
        <ecNumber evidence="3">3.6.4.12</ecNumber>
    </recommendedName>
    <alternativeName>
        <fullName>RAD54 homolog</fullName>
        <shortName>mHR54</shortName>
        <shortName>mRAD54</shortName>
    </alternativeName>
</protein>
<gene>
    <name type="primary">Rad54l</name>
    <name type="synonym">Rad54</name>
</gene>
<name>RAD54_MOUSE</name>
<keyword id="KW-0007">Acetylation</keyword>
<keyword id="KW-0067">ATP-binding</keyword>
<keyword id="KW-0227">DNA damage</keyword>
<keyword id="KW-0234">DNA repair</keyword>
<keyword id="KW-0238">DNA-binding</keyword>
<keyword id="KW-0347">Helicase</keyword>
<keyword id="KW-0378">Hydrolase</keyword>
<keyword id="KW-0479">Metal-binding</keyword>
<keyword id="KW-0547">Nucleotide-binding</keyword>
<keyword id="KW-0539">Nucleus</keyword>
<keyword id="KW-0597">Phosphoprotein</keyword>
<keyword id="KW-1185">Reference proteome</keyword>
<keyword id="KW-0862">Zinc</keyword>
<dbReference type="EC" id="3.6.4.12" evidence="3"/>
<dbReference type="EMBL" id="X97796">
    <property type="protein sequence ID" value="CAA66380.1"/>
    <property type="molecule type" value="mRNA"/>
</dbReference>
<dbReference type="EMBL" id="AK088876">
    <property type="protein sequence ID" value="BAC40627.1"/>
    <property type="molecule type" value="mRNA"/>
</dbReference>
<dbReference type="EMBL" id="BC021643">
    <property type="protein sequence ID" value="AAH21643.1"/>
    <property type="molecule type" value="mRNA"/>
</dbReference>
<dbReference type="CCDS" id="CCDS18504.1"/>
<dbReference type="RefSeq" id="NP_001116430.1">
    <property type="nucleotide sequence ID" value="NM_001122958.2"/>
</dbReference>
<dbReference type="RefSeq" id="NP_001116431.1">
    <property type="nucleotide sequence ID" value="NM_001122959.2"/>
</dbReference>
<dbReference type="RefSeq" id="NP_001411773.1">
    <property type="nucleotide sequence ID" value="NM_001424844.1"/>
</dbReference>
<dbReference type="RefSeq" id="NP_001411774.1">
    <property type="nucleotide sequence ID" value="NM_001424845.1"/>
</dbReference>
<dbReference type="RefSeq" id="NP_033041.3">
    <property type="nucleotide sequence ID" value="NM_009015.3"/>
</dbReference>
<dbReference type="RefSeq" id="XP_006502940.1">
    <property type="nucleotide sequence ID" value="XM_006502877.3"/>
</dbReference>
<dbReference type="RefSeq" id="XP_006502941.1">
    <property type="nucleotide sequence ID" value="XM_006502878.3"/>
</dbReference>
<dbReference type="SMR" id="P70270"/>
<dbReference type="BioGRID" id="202569">
    <property type="interactions" value="9"/>
</dbReference>
<dbReference type="FunCoup" id="P70270">
    <property type="interactions" value="1644"/>
</dbReference>
<dbReference type="IntAct" id="P70270">
    <property type="interactions" value="6"/>
</dbReference>
<dbReference type="STRING" id="10090.ENSMUSP00000099765"/>
<dbReference type="iPTMnet" id="P70270"/>
<dbReference type="PhosphoSitePlus" id="P70270"/>
<dbReference type="PaxDb" id="10090-ENSMUSP00000099765"/>
<dbReference type="PeptideAtlas" id="P70270"/>
<dbReference type="ProteomicsDB" id="300346"/>
<dbReference type="Pumba" id="P70270"/>
<dbReference type="Antibodypedia" id="18708">
    <property type="antibodies" value="262 antibodies from 31 providers"/>
</dbReference>
<dbReference type="DNASU" id="19366"/>
<dbReference type="Ensembl" id="ENSMUST00000102704.4">
    <property type="protein sequence ID" value="ENSMUSP00000099765.4"/>
    <property type="gene ID" value="ENSMUSG00000028702.16"/>
</dbReference>
<dbReference type="Ensembl" id="ENSMUST00000102705.10">
    <property type="protein sequence ID" value="ENSMUSP00000099766.4"/>
    <property type="gene ID" value="ENSMUSG00000028702.16"/>
</dbReference>
<dbReference type="GeneID" id="19366"/>
<dbReference type="KEGG" id="mmu:19366"/>
<dbReference type="UCSC" id="uc008ugb.2">
    <property type="organism name" value="mouse"/>
</dbReference>
<dbReference type="AGR" id="MGI:894697"/>
<dbReference type="CTD" id="8438"/>
<dbReference type="MGI" id="MGI:894697">
    <property type="gene designation" value="Rad54l"/>
</dbReference>
<dbReference type="VEuPathDB" id="HostDB:ENSMUSG00000028702"/>
<dbReference type="eggNOG" id="KOG0390">
    <property type="taxonomic scope" value="Eukaryota"/>
</dbReference>
<dbReference type="GeneTree" id="ENSGT00940000156897"/>
<dbReference type="HOGENOM" id="CLU_000315_10_5_1"/>
<dbReference type="InParanoid" id="P70270"/>
<dbReference type="OMA" id="YTEHERM"/>
<dbReference type="OrthoDB" id="413460at2759"/>
<dbReference type="PhylomeDB" id="P70270"/>
<dbReference type="TreeFam" id="TF101224"/>
<dbReference type="BioGRID-ORCS" id="19366">
    <property type="hits" value="14 hits in 115 CRISPR screens"/>
</dbReference>
<dbReference type="ChiTaRS" id="Rad54l">
    <property type="organism name" value="mouse"/>
</dbReference>
<dbReference type="PRO" id="PR:P70270"/>
<dbReference type="Proteomes" id="UP000000589">
    <property type="component" value="Chromosome 4"/>
</dbReference>
<dbReference type="RNAct" id="P70270">
    <property type="molecule type" value="protein"/>
</dbReference>
<dbReference type="Bgee" id="ENSMUSG00000028702">
    <property type="expression patterns" value="Expressed in presomitic mesoderm and 164 other cell types or tissues"/>
</dbReference>
<dbReference type="GO" id="GO:0005654">
    <property type="term" value="C:nucleoplasm"/>
    <property type="evidence" value="ECO:0007669"/>
    <property type="project" value="Ensembl"/>
</dbReference>
<dbReference type="GO" id="GO:0032991">
    <property type="term" value="C:protein-containing complex"/>
    <property type="evidence" value="ECO:0007669"/>
    <property type="project" value="Ensembl"/>
</dbReference>
<dbReference type="GO" id="GO:0005524">
    <property type="term" value="F:ATP binding"/>
    <property type="evidence" value="ECO:0007669"/>
    <property type="project" value="UniProtKB-KW"/>
</dbReference>
<dbReference type="GO" id="GO:0016887">
    <property type="term" value="F:ATP hydrolysis activity"/>
    <property type="evidence" value="ECO:0007669"/>
    <property type="project" value="RHEA"/>
</dbReference>
<dbReference type="GO" id="GO:0036310">
    <property type="term" value="F:ATP-dependent DNA/DNA annealing activity"/>
    <property type="evidence" value="ECO:0000250"/>
    <property type="project" value="UniProtKB"/>
</dbReference>
<dbReference type="GO" id="GO:0004386">
    <property type="term" value="F:helicase activity"/>
    <property type="evidence" value="ECO:0007669"/>
    <property type="project" value="UniProtKB-KW"/>
</dbReference>
<dbReference type="GO" id="GO:0046872">
    <property type="term" value="F:metal ion binding"/>
    <property type="evidence" value="ECO:0007669"/>
    <property type="project" value="UniProtKB-KW"/>
</dbReference>
<dbReference type="GO" id="GO:0051276">
    <property type="term" value="P:chromosome organization"/>
    <property type="evidence" value="ECO:0000316"/>
    <property type="project" value="MGI"/>
</dbReference>
<dbReference type="GO" id="GO:0008340">
    <property type="term" value="P:determination of adult lifespan"/>
    <property type="evidence" value="ECO:0000316"/>
    <property type="project" value="MGI"/>
</dbReference>
<dbReference type="GO" id="GO:0006974">
    <property type="term" value="P:DNA damage response"/>
    <property type="evidence" value="ECO:0000315"/>
    <property type="project" value="MGI"/>
</dbReference>
<dbReference type="GO" id="GO:0006302">
    <property type="term" value="P:double-strand break repair"/>
    <property type="evidence" value="ECO:0000316"/>
    <property type="project" value="MGI"/>
</dbReference>
<dbReference type="GO" id="GO:0000724">
    <property type="term" value="P:double-strand break repair via homologous recombination"/>
    <property type="evidence" value="ECO:0000315"/>
    <property type="project" value="MGI"/>
</dbReference>
<dbReference type="GO" id="GO:0010212">
    <property type="term" value="P:response to ionizing radiation"/>
    <property type="evidence" value="ECO:0000315"/>
    <property type="project" value="MGI"/>
</dbReference>
<dbReference type="GO" id="GO:0009410">
    <property type="term" value="P:response to xenobiotic stimulus"/>
    <property type="evidence" value="ECO:0000315"/>
    <property type="project" value="MGI"/>
</dbReference>
<dbReference type="CDD" id="cd18067">
    <property type="entry name" value="DEXHc_RAD54A"/>
    <property type="match status" value="1"/>
</dbReference>
<dbReference type="CDD" id="cd18793">
    <property type="entry name" value="SF2_C_SNF"/>
    <property type="match status" value="1"/>
</dbReference>
<dbReference type="FunFam" id="1.20.120.850:FF:000002">
    <property type="entry name" value="DNA repair and recombination protein RAD54-like"/>
    <property type="match status" value="1"/>
</dbReference>
<dbReference type="FunFam" id="3.40.50.10810:FF:000010">
    <property type="entry name" value="DNA repair and recombination protein RAD54-like"/>
    <property type="match status" value="1"/>
</dbReference>
<dbReference type="FunFam" id="3.40.50.300:FF:000332">
    <property type="entry name" value="DNA repair and recombination protein RAD54-like"/>
    <property type="match status" value="1"/>
</dbReference>
<dbReference type="Gene3D" id="3.40.50.300">
    <property type="entry name" value="P-loop containing nucleotide triphosphate hydrolases"/>
    <property type="match status" value="1"/>
</dbReference>
<dbReference type="Gene3D" id="1.20.120.850">
    <property type="entry name" value="SWI2/SNF2 ATPases, N-terminal domain"/>
    <property type="match status" value="1"/>
</dbReference>
<dbReference type="Gene3D" id="3.40.50.10810">
    <property type="entry name" value="Tandem AAA-ATPase domain"/>
    <property type="match status" value="1"/>
</dbReference>
<dbReference type="InterPro" id="IPR014001">
    <property type="entry name" value="Helicase_ATP-bd"/>
</dbReference>
<dbReference type="InterPro" id="IPR001650">
    <property type="entry name" value="Helicase_C-like"/>
</dbReference>
<dbReference type="InterPro" id="IPR027417">
    <property type="entry name" value="P-loop_NTPase"/>
</dbReference>
<dbReference type="InterPro" id="IPR038718">
    <property type="entry name" value="SNF2-like_sf"/>
</dbReference>
<dbReference type="InterPro" id="IPR049730">
    <property type="entry name" value="SNF2/RAD54-like_C"/>
</dbReference>
<dbReference type="InterPro" id="IPR000330">
    <property type="entry name" value="SNF2_N"/>
</dbReference>
<dbReference type="InterPro" id="IPR050496">
    <property type="entry name" value="SNF2_RAD54_helicase_repair"/>
</dbReference>
<dbReference type="PANTHER" id="PTHR45629:SF7">
    <property type="entry name" value="DNA EXCISION REPAIR PROTEIN ERCC-6-RELATED"/>
    <property type="match status" value="1"/>
</dbReference>
<dbReference type="PANTHER" id="PTHR45629">
    <property type="entry name" value="SNF2/RAD54 FAMILY MEMBER"/>
    <property type="match status" value="1"/>
</dbReference>
<dbReference type="Pfam" id="PF00271">
    <property type="entry name" value="Helicase_C"/>
    <property type="match status" value="1"/>
</dbReference>
<dbReference type="Pfam" id="PF00176">
    <property type="entry name" value="SNF2-rel_dom"/>
    <property type="match status" value="1"/>
</dbReference>
<dbReference type="SMART" id="SM00487">
    <property type="entry name" value="DEXDc"/>
    <property type="match status" value="1"/>
</dbReference>
<dbReference type="SMART" id="SM00490">
    <property type="entry name" value="HELICc"/>
    <property type="match status" value="1"/>
</dbReference>
<dbReference type="SUPFAM" id="SSF52540">
    <property type="entry name" value="P-loop containing nucleoside triphosphate hydrolases"/>
    <property type="match status" value="2"/>
</dbReference>
<dbReference type="PROSITE" id="PS51192">
    <property type="entry name" value="HELICASE_ATP_BIND_1"/>
    <property type="match status" value="1"/>
</dbReference>
<dbReference type="PROSITE" id="PS51194">
    <property type="entry name" value="HELICASE_CTER"/>
    <property type="match status" value="1"/>
</dbReference>
<feature type="chain" id="PRO_0000074338" description="DNA repair and recombination protein RAD54-like">
    <location>
        <begin position="1"/>
        <end position="747"/>
    </location>
</feature>
<feature type="domain" description="Helicase ATP-binding" evidence="5">
    <location>
        <begin position="170"/>
        <end position="345"/>
    </location>
</feature>
<feature type="domain" description="Helicase C-terminal" evidence="6">
    <location>
        <begin position="500"/>
        <end position="653"/>
    </location>
</feature>
<feature type="region of interest" description="Disordered" evidence="7">
    <location>
        <begin position="1"/>
        <end position="42"/>
    </location>
</feature>
<feature type="region of interest" description="Required for chromatin remodeling, strand pairing activities and coupling of ATPase activity" evidence="1">
    <location>
        <begin position="2"/>
        <end position="9"/>
    </location>
</feature>
<feature type="short sequence motif" description="DEGH box">
    <location>
        <begin position="296"/>
        <end position="299"/>
    </location>
</feature>
<feature type="binding site" evidence="5">
    <location>
        <begin position="183"/>
        <end position="190"/>
    </location>
    <ligand>
        <name>ATP</name>
        <dbReference type="ChEBI" id="CHEBI:30616"/>
    </ligand>
</feature>
<feature type="modified residue" description="Phosphoserine" evidence="4">
    <location>
        <position position="38"/>
    </location>
</feature>
<feature type="modified residue" description="N6-acetyllysine" evidence="4">
    <location>
        <position position="515"/>
    </location>
</feature>
<feature type="modified residue" description="Phosphoserine; by NEK1" evidence="4">
    <location>
        <position position="572"/>
    </location>
</feature>
<feature type="sequence conflict" description="In Ref. 3; AAH21643." evidence="17" ref="3">
    <original>A</original>
    <variation>V</variation>
    <location>
        <position position="103"/>
    </location>
</feature>
<feature type="sequence conflict" description="In Ref. 1; CAA66380." evidence="17" ref="1">
    <original>I</original>
    <variation>V</variation>
    <location>
        <position position="148"/>
    </location>
</feature>
<feature type="sequence conflict" description="In Ref. 2; BAC40627." evidence="17" ref="2">
    <original>I</original>
    <variation>V</variation>
    <location>
        <position position="504"/>
    </location>
</feature>
<accession>P70270</accession>
<accession>Q8BSR5</accession>
<accession>Q8C2C4</accession>
<accession>Q8K3D4</accession>
<comment type="function">
    <text evidence="2 8 9 10 11 12 13 14 16">Plays an essential role in homologous recombination (HR) which is a major pathway for repairing DNA double-strand breaks (DSBs), single-stranded DNA (ssDNA) gaps, and stalled or collapsed replication forks. Acts as a molecular motor during the homology search and guides RAD51 ssDNA along a donor dsDNA thereby changing the homology search from the diffusion-based mechanism to a motor-guided mechanism. Plays also an essential role in RAD51-mediated synaptic complex formation which consists of three strands encased in a protein filament formed once homology is recognized. Once DNA strand exchange occured, dissociates RAD51 from nucleoprotein filaments formed on dsDNA (By similarity). Deficiency also resulted in an increased frequency of end-to-end chromosome fusions involving telomeres compared to the controls, suggesting a putative role in telomere capping. Non-homologous end joining (NHEJ) and homologous recombination (HR) represent the two major pathways of DNA double-strand break (DSB) repair in eukaryotic cells. LIG4 and RAD54L cooperate to support cellular proliferation, repair spontaneous DSBs, and prevent chromosome and single chromatid aberrations (PubMed:10209103, PubMed:10757799, PubMed:12218123, PubMed:12531026, PubMed:12548566, PubMed:12897131, PubMed:15175260, PubMed:9108475).</text>
</comment>
<comment type="catalytic activity">
    <reaction evidence="2">
        <text>ATP + H2O = ADP + phosphate + H(+)</text>
        <dbReference type="Rhea" id="RHEA:13065"/>
        <dbReference type="ChEBI" id="CHEBI:15377"/>
        <dbReference type="ChEBI" id="CHEBI:15378"/>
        <dbReference type="ChEBI" id="CHEBI:30616"/>
        <dbReference type="ChEBI" id="CHEBI:43474"/>
        <dbReference type="ChEBI" id="CHEBI:456216"/>
        <dbReference type="EC" id="3.6.4.12"/>
    </reaction>
</comment>
<comment type="subunit">
    <text evidence="2 3">Homohexamer (By similarity). Interacts (via N-terminus) with RAD51 (By similarity). Interacts with NAP1L1 (By similarity). Interacts with BRD9; this interaction orchestrates RAD51-RAD54 complex formation (By similarity).</text>
</comment>
<comment type="subcellular location">
    <subcellularLocation>
        <location evidence="17">Nucleus</location>
    </subcellularLocation>
</comment>
<comment type="tissue specificity">
    <text evidence="15">Hardly detectable in most tissues. Dramatically increased in thymus, spleen and testis.</text>
</comment>
<comment type="PTM">
    <text evidence="4">Acetylated. Acetylation promotes interaction with BRD9, and subsequently with RAD54, which is essential for homologous recombination (HR).</text>
</comment>
<comment type="PTM">
    <text evidence="4">Phosphorylated. Phosphorylation at Ser-572 by NEK1 specifically in G2 phase allows efficient removal of RAD51 filaments from DNA.</text>
</comment>
<comment type="miscellaneous">
    <text>The nucleus of a mouse embryonic stem (ES) cell contains on average 2.4 x 10(5) molecules.</text>
</comment>
<comment type="similarity">
    <text evidence="17">Belongs to the SNF2/RAD54 helicase family.</text>
</comment>
<organism>
    <name type="scientific">Mus musculus</name>
    <name type="common">Mouse</name>
    <dbReference type="NCBI Taxonomy" id="10090"/>
    <lineage>
        <taxon>Eukaryota</taxon>
        <taxon>Metazoa</taxon>
        <taxon>Chordata</taxon>
        <taxon>Craniata</taxon>
        <taxon>Vertebrata</taxon>
        <taxon>Euteleostomi</taxon>
        <taxon>Mammalia</taxon>
        <taxon>Eutheria</taxon>
        <taxon>Euarchontoglires</taxon>
        <taxon>Glires</taxon>
        <taxon>Rodentia</taxon>
        <taxon>Myomorpha</taxon>
        <taxon>Muroidea</taxon>
        <taxon>Muridae</taxon>
        <taxon>Murinae</taxon>
        <taxon>Mus</taxon>
        <taxon>Mus</taxon>
    </lineage>
</organism>
<sequence length="747" mass="84694">MRRSLAPSQLARRKPEDRSSDDEDWQPGTVTPKKRKSSSETQVQECFLSPFRKPLTQLLNRPPCLDSSQHEAFIRSILSKPFKVPIPNYQGPLGSRALGLKRAGVRRALHDPLEEGALVLYEPPPLSAHDQLKLDKEKLPVHVVVDPILSKVLRPHQREGVKFLWECVTSRRIPGSHGCIMADEMGLGKTLQCITLMWTLLRQSPECKPEIEKAVVVSPSSLVKNWYNEVEKWLGGRIQPLAIDGGSKDEIDRKLEGFMNQRGARVPSPILIISYETFRLHVGVLKKGNVGLVICDEGHRLKNSENQTYQALDSLNTSRRVLISGTPIQNDLLEYFSLVHFVNSGILGTAHEFKKHFELPILKSRDAAASEADRQRGEERLRELIGIVNRCLIRRTSDILSKYLPVKIEQVVCCRLTPLQTELYKRFLRQAKPEEELREGKMSVSSLSSITSLKKLCNHPALIYDKCVAEEDGFEGTLGIFPPGYNSKAVEPQLSGKMLVLDYILAVTRSRSSDKVVLVSNYTQTLDLFEKLCRVRRYLYVRLDGTMSIKKRAKVVERFNSPSSPDFVFMLSSKAGGCGLNLIGANRLVMFDPDWNPANDEQAMARVWRDGQKKICYIYRLLSAGTIEEKIFQRQSHKKALSSCVVDEEQDVERHFSLGELKELFTLDEASLSDTHDRLHCRRCVNNRQVWPPPDGSDCTSDLAQWNHSTDKRGLQDEVLQAAWDASSTAITFVFHQRSHEEQRGLH</sequence>